<protein>
    <recommendedName>
        <fullName evidence="1">Nucleotide-binding protein ABO_0549</fullName>
    </recommendedName>
</protein>
<comment type="function">
    <text evidence="1">Displays ATPase and GTPase activities.</text>
</comment>
<comment type="similarity">
    <text evidence="1">Belongs to the RapZ-like family.</text>
</comment>
<gene>
    <name type="ordered locus">ABO_0549</name>
</gene>
<keyword id="KW-0067">ATP-binding</keyword>
<keyword id="KW-0342">GTP-binding</keyword>
<keyword id="KW-0547">Nucleotide-binding</keyword>
<keyword id="KW-1185">Reference proteome</keyword>
<name>Y549_ALCBS</name>
<reference key="1">
    <citation type="journal article" date="2006" name="Nat. Biotechnol.">
        <title>Genome sequence of the ubiquitous hydrocarbon-degrading marine bacterium Alcanivorax borkumensis.</title>
        <authorList>
            <person name="Schneiker S."/>
            <person name="Martins dos Santos V.A.P."/>
            <person name="Bartels D."/>
            <person name="Bekel T."/>
            <person name="Brecht M."/>
            <person name="Buhrmester J."/>
            <person name="Chernikova T.N."/>
            <person name="Denaro R."/>
            <person name="Ferrer M."/>
            <person name="Gertler C."/>
            <person name="Goesmann A."/>
            <person name="Golyshina O.V."/>
            <person name="Kaminski F."/>
            <person name="Khachane A.N."/>
            <person name="Lang S."/>
            <person name="Linke B."/>
            <person name="McHardy A.C."/>
            <person name="Meyer F."/>
            <person name="Nechitaylo T."/>
            <person name="Puehler A."/>
            <person name="Regenhardt D."/>
            <person name="Rupp O."/>
            <person name="Sabirova J.S."/>
            <person name="Selbitschka W."/>
            <person name="Yakimov M.M."/>
            <person name="Timmis K.N."/>
            <person name="Vorhoelter F.-J."/>
            <person name="Weidner S."/>
            <person name="Kaiser O."/>
            <person name="Golyshin P.N."/>
        </authorList>
    </citation>
    <scope>NUCLEOTIDE SEQUENCE [LARGE SCALE GENOMIC DNA]</scope>
    <source>
        <strain>ATCC 700651 / DSM 11573 / NCIMB 13689 / SK2</strain>
    </source>
</reference>
<feature type="chain" id="PRO_0000258943" description="Nucleotide-binding protein ABO_0549">
    <location>
        <begin position="1"/>
        <end position="282"/>
    </location>
</feature>
<feature type="binding site" evidence="1">
    <location>
        <begin position="8"/>
        <end position="15"/>
    </location>
    <ligand>
        <name>ATP</name>
        <dbReference type="ChEBI" id="CHEBI:30616"/>
    </ligand>
</feature>
<feature type="binding site" evidence="1">
    <location>
        <begin position="59"/>
        <end position="62"/>
    </location>
    <ligand>
        <name>GTP</name>
        <dbReference type="ChEBI" id="CHEBI:37565"/>
    </ligand>
</feature>
<organism>
    <name type="scientific">Alcanivorax borkumensis (strain ATCC 700651 / DSM 11573 / NCIMB 13689 / SK2)</name>
    <dbReference type="NCBI Taxonomy" id="393595"/>
    <lineage>
        <taxon>Bacteria</taxon>
        <taxon>Pseudomonadati</taxon>
        <taxon>Pseudomonadota</taxon>
        <taxon>Gammaproteobacteria</taxon>
        <taxon>Oceanospirillales</taxon>
        <taxon>Alcanivoracaceae</taxon>
        <taxon>Alcanivorax</taxon>
    </lineage>
</organism>
<evidence type="ECO:0000255" key="1">
    <source>
        <dbReference type="HAMAP-Rule" id="MF_00636"/>
    </source>
</evidence>
<accession>Q0VS51</accession>
<sequence>MKLTIISGRSGSGKTTALQALEDQGFYCVDNLPVGMLPTLAKQLSEGDPPIERVAVGIDARNLPAQLLAFDNILHALNEQQVRSEIIYLDADDHTLLTRFSATRRRHPLGTDQRSLADAIGHERELLANIRQRADLVIDSSNHDVHTLRNLMRERVARREATLSLQLESFGFKNGLPTDADLVFDVRVLPNPHWHADLRPFTGKDDCIIEFLSQHQASHDMLKDIGDFVVRWLPAFANSDRSYVTVAIGCTGGRHRSVFITEQLAKNLRAEGIVLQVRHREL</sequence>
<proteinExistence type="inferred from homology"/>
<dbReference type="EMBL" id="AM286690">
    <property type="protein sequence ID" value="CAL15997.1"/>
    <property type="molecule type" value="Genomic_DNA"/>
</dbReference>
<dbReference type="SMR" id="Q0VS51"/>
<dbReference type="STRING" id="393595.ABO_0549"/>
<dbReference type="KEGG" id="abo:ABO_0549"/>
<dbReference type="eggNOG" id="COG1660">
    <property type="taxonomic scope" value="Bacteria"/>
</dbReference>
<dbReference type="HOGENOM" id="CLU_059558_1_1_6"/>
<dbReference type="OrthoDB" id="9784461at2"/>
<dbReference type="Proteomes" id="UP000008871">
    <property type="component" value="Chromosome"/>
</dbReference>
<dbReference type="GO" id="GO:0005524">
    <property type="term" value="F:ATP binding"/>
    <property type="evidence" value="ECO:0007669"/>
    <property type="project" value="UniProtKB-UniRule"/>
</dbReference>
<dbReference type="GO" id="GO:0005525">
    <property type="term" value="F:GTP binding"/>
    <property type="evidence" value="ECO:0007669"/>
    <property type="project" value="UniProtKB-UniRule"/>
</dbReference>
<dbReference type="Gene3D" id="3.40.50.300">
    <property type="entry name" value="P-loop containing nucleotide triphosphate hydrolases"/>
    <property type="match status" value="1"/>
</dbReference>
<dbReference type="HAMAP" id="MF_00636">
    <property type="entry name" value="RapZ_like"/>
    <property type="match status" value="1"/>
</dbReference>
<dbReference type="InterPro" id="IPR027417">
    <property type="entry name" value="P-loop_NTPase"/>
</dbReference>
<dbReference type="InterPro" id="IPR005337">
    <property type="entry name" value="RapZ-like"/>
</dbReference>
<dbReference type="InterPro" id="IPR053930">
    <property type="entry name" value="RapZ-like_N"/>
</dbReference>
<dbReference type="InterPro" id="IPR053931">
    <property type="entry name" value="RapZ_C"/>
</dbReference>
<dbReference type="NCBIfam" id="NF003828">
    <property type="entry name" value="PRK05416.1"/>
    <property type="match status" value="1"/>
</dbReference>
<dbReference type="PANTHER" id="PTHR30448">
    <property type="entry name" value="RNASE ADAPTER PROTEIN RAPZ"/>
    <property type="match status" value="1"/>
</dbReference>
<dbReference type="PANTHER" id="PTHR30448:SF0">
    <property type="entry name" value="RNASE ADAPTER PROTEIN RAPZ"/>
    <property type="match status" value="1"/>
</dbReference>
<dbReference type="Pfam" id="PF22740">
    <property type="entry name" value="PapZ_C"/>
    <property type="match status" value="1"/>
</dbReference>
<dbReference type="Pfam" id="PF03668">
    <property type="entry name" value="RapZ-like_N"/>
    <property type="match status" value="1"/>
</dbReference>
<dbReference type="PIRSF" id="PIRSF005052">
    <property type="entry name" value="P-loopkin"/>
    <property type="match status" value="1"/>
</dbReference>
<dbReference type="SUPFAM" id="SSF52540">
    <property type="entry name" value="P-loop containing nucleoside triphosphate hydrolases"/>
    <property type="match status" value="1"/>
</dbReference>